<name>RDS2_XENLA</name>
<keyword id="KW-1015">Disulfide bond</keyword>
<keyword id="KW-0325">Glycoprotein</keyword>
<keyword id="KW-0472">Membrane</keyword>
<keyword id="KW-1185">Reference proteome</keyword>
<keyword id="KW-0812">Transmembrane</keyword>
<keyword id="KW-1133">Transmembrane helix</keyword>
<accession>O42582</accession>
<sequence length="345" mass="38727">MVLFKAKFSFQRRVKLAQTLWLLSWLSVLVGCLTFGMGIFLKVQLWIHNEVMDNTTAHAVPNTVITAGLVGILLGYFAGKISQASMDLTKYQRWKSFMMPFFFLAILSCIVCLAALVLSVALRGTLEESLKIGLRNAIRFYKDTDTPGRCYQKRSMDKLEMDFQCCGNNHPKDWFEVQWISNRYLDFSSKEVKDRIKSSVDGRYLMDSVPFTCCNPSSPRPCIQIEITNNSAHYSYNFQGDDVNIWVRGCREALLGYYTGIMATNGAAVTLSFLLQASVLVSLRYVQTSMDKIRDPDDVEADTEGFLLEKGVMETVNSSLEKIKDLFKSNQVETAEGGGEGAAGS</sequence>
<organism>
    <name type="scientific">Xenopus laevis</name>
    <name type="common">African clawed frog</name>
    <dbReference type="NCBI Taxonomy" id="8355"/>
    <lineage>
        <taxon>Eukaryota</taxon>
        <taxon>Metazoa</taxon>
        <taxon>Chordata</taxon>
        <taxon>Craniata</taxon>
        <taxon>Vertebrata</taxon>
        <taxon>Euteleostomi</taxon>
        <taxon>Amphibia</taxon>
        <taxon>Batrachia</taxon>
        <taxon>Anura</taxon>
        <taxon>Pipoidea</taxon>
        <taxon>Pipidae</taxon>
        <taxon>Xenopodinae</taxon>
        <taxon>Xenopus</taxon>
        <taxon>Xenopus</taxon>
    </lineage>
</organism>
<proteinExistence type="evidence at transcript level"/>
<protein>
    <recommendedName>
        <fullName>RDS/peripherin-like protein xRDS36</fullName>
    </recommendedName>
</protein>
<feature type="chain" id="PRO_0000168115" description="RDS/peripherin-like protein xRDS36">
    <location>
        <begin position="1"/>
        <end position="345"/>
    </location>
</feature>
<feature type="topological domain" description="Cytoplasmic" evidence="1">
    <location>
        <begin position="1"/>
        <end position="24"/>
    </location>
</feature>
<feature type="transmembrane region" description="Helical" evidence="1">
    <location>
        <begin position="25"/>
        <end position="43"/>
    </location>
</feature>
<feature type="topological domain" description="Lumenal" evidence="1">
    <location>
        <begin position="44"/>
        <end position="61"/>
    </location>
</feature>
<feature type="transmembrane region" description="Helical" evidence="1">
    <location>
        <begin position="62"/>
        <end position="80"/>
    </location>
</feature>
<feature type="topological domain" description="Cytoplasmic" evidence="1">
    <location>
        <begin position="81"/>
        <end position="99"/>
    </location>
</feature>
<feature type="transmembrane region" description="Helical" evidence="1">
    <location>
        <begin position="100"/>
        <end position="123"/>
    </location>
</feature>
<feature type="topological domain" description="Lumenal" evidence="1">
    <location>
        <begin position="124"/>
        <end position="264"/>
    </location>
</feature>
<feature type="transmembrane region" description="Helical" evidence="1">
    <location>
        <begin position="265"/>
        <end position="290"/>
    </location>
</feature>
<feature type="topological domain" description="Cytoplasmic" evidence="1">
    <location>
        <begin position="291"/>
        <end position="345"/>
    </location>
</feature>
<feature type="glycosylation site" description="N-linked (GlcNAc...) asparagine" evidence="1">
    <location>
        <position position="54"/>
    </location>
</feature>
<feature type="glycosylation site" description="N-linked (GlcNAc...) asparagine" evidence="1">
    <location>
        <position position="229"/>
    </location>
</feature>
<comment type="subunit">
    <text>Homodimer; disulfide-linked.</text>
</comment>
<comment type="subcellular location">
    <subcellularLocation>
        <location>Membrane</location>
        <topology>Multi-pass membrane protein</topology>
    </subcellularLocation>
</comment>
<comment type="tissue specificity">
    <text>Rod specific.</text>
</comment>
<comment type="similarity">
    <text evidence="2">Belongs to the PRPH2/ROM1 family.</text>
</comment>
<evidence type="ECO:0000255" key="1"/>
<evidence type="ECO:0000305" key="2"/>
<dbReference type="EMBL" id="L79914">
    <property type="protein sequence ID" value="AAB64232.1"/>
    <property type="molecule type" value="mRNA"/>
</dbReference>
<dbReference type="RefSeq" id="NP_001081693.1">
    <property type="nucleotide sequence ID" value="NM_001088224.1"/>
</dbReference>
<dbReference type="SMR" id="O42582"/>
<dbReference type="GlyCosmos" id="O42582">
    <property type="glycosylation" value="2 sites, No reported glycans"/>
</dbReference>
<dbReference type="GeneID" id="398001"/>
<dbReference type="KEGG" id="xla:398001"/>
<dbReference type="AGR" id="Xenbase:XB-GENE-17334124"/>
<dbReference type="CTD" id="398001"/>
<dbReference type="Xenbase" id="XB-GENE-17334124">
    <property type="gene designation" value="rom1.S"/>
</dbReference>
<dbReference type="OrthoDB" id="9836210at2759"/>
<dbReference type="Proteomes" id="UP000186698">
    <property type="component" value="Chromosome 4S"/>
</dbReference>
<dbReference type="Bgee" id="398001">
    <property type="expression patterns" value="Expressed in camera-type eye and 3 other cell types or tissues"/>
</dbReference>
<dbReference type="GO" id="GO:0005886">
    <property type="term" value="C:plasma membrane"/>
    <property type="evidence" value="ECO:0007669"/>
    <property type="project" value="TreeGrafter"/>
</dbReference>
<dbReference type="GO" id="GO:0007601">
    <property type="term" value="P:visual perception"/>
    <property type="evidence" value="ECO:0007669"/>
    <property type="project" value="InterPro"/>
</dbReference>
<dbReference type="CDD" id="cd03162">
    <property type="entry name" value="peripherin_like_LEL"/>
    <property type="match status" value="1"/>
</dbReference>
<dbReference type="FunFam" id="1.10.1450.10:FF:000002">
    <property type="entry name" value="Retinal outer segment membrane protein 1"/>
    <property type="match status" value="1"/>
</dbReference>
<dbReference type="Gene3D" id="1.10.1450.10">
    <property type="entry name" value="Tetraspanin"/>
    <property type="match status" value="1"/>
</dbReference>
<dbReference type="InterPro" id="IPR000830">
    <property type="entry name" value="Peripherin/rom-1"/>
</dbReference>
<dbReference type="InterPro" id="IPR018498">
    <property type="entry name" value="Peripherin/rom-1_CS"/>
</dbReference>
<dbReference type="InterPro" id="IPR042026">
    <property type="entry name" value="Peripherin_LEL"/>
</dbReference>
<dbReference type="InterPro" id="IPR018499">
    <property type="entry name" value="Tetraspanin/Peripherin"/>
</dbReference>
<dbReference type="InterPro" id="IPR008952">
    <property type="entry name" value="Tetraspanin_EC2_sf"/>
</dbReference>
<dbReference type="PANTHER" id="PTHR19282:SF440">
    <property type="entry name" value="PERIPHERIN-2"/>
    <property type="match status" value="1"/>
</dbReference>
<dbReference type="PANTHER" id="PTHR19282">
    <property type="entry name" value="TETRASPANIN"/>
    <property type="match status" value="1"/>
</dbReference>
<dbReference type="Pfam" id="PF00335">
    <property type="entry name" value="Tetraspanin"/>
    <property type="match status" value="1"/>
</dbReference>
<dbReference type="PRINTS" id="PR00218">
    <property type="entry name" value="PERIPHERNRDS"/>
</dbReference>
<dbReference type="SUPFAM" id="SSF48652">
    <property type="entry name" value="Tetraspanin"/>
    <property type="match status" value="1"/>
</dbReference>
<dbReference type="PROSITE" id="PS00930">
    <property type="entry name" value="RDS_ROM1"/>
    <property type="match status" value="1"/>
</dbReference>
<reference key="1">
    <citation type="journal article" date="1996" name="J. Cell Sci.">
        <title>Three homologs of rds/peripherin in Xenopus laevis photoreceptors that exhibit covalent and non-covalent interactions.</title>
        <authorList>
            <person name="Kedzierski W."/>
            <person name="Moghrabi W.N."/>
            <person name="Allen A.C."/>
            <person name="Jablonski-Stiemke M.M."/>
            <person name="Azarian S.M."/>
            <person name="Bok D."/>
            <person name="Travis G.H."/>
        </authorList>
    </citation>
    <scope>NUCLEOTIDE SEQUENCE [MRNA]</scope>
</reference>
<gene>
    <name type="primary">rds36</name>
</gene>